<name>ISAA_STAHJ</name>
<evidence type="ECO:0000250" key="1"/>
<evidence type="ECO:0000255" key="2"/>
<evidence type="ECO:0000256" key="3">
    <source>
        <dbReference type="SAM" id="MobiDB-lite"/>
    </source>
</evidence>
<evidence type="ECO:0000305" key="4"/>
<organism>
    <name type="scientific">Staphylococcus haemolyticus (strain JCSC1435)</name>
    <dbReference type="NCBI Taxonomy" id="279808"/>
    <lineage>
        <taxon>Bacteria</taxon>
        <taxon>Bacillati</taxon>
        <taxon>Bacillota</taxon>
        <taxon>Bacilli</taxon>
        <taxon>Bacillales</taxon>
        <taxon>Staphylococcaceae</taxon>
        <taxon>Staphylococcus</taxon>
    </lineage>
</organism>
<feature type="signal peptide" evidence="2">
    <location>
        <begin position="1"/>
        <end position="29"/>
    </location>
</feature>
<feature type="chain" id="PRO_0000272659" description="Probable transglycosylase IsaA">
    <location>
        <begin position="30"/>
        <end position="238"/>
    </location>
</feature>
<feature type="region of interest" description="Disordered" evidence="3">
    <location>
        <begin position="115"/>
        <end position="157"/>
    </location>
</feature>
<feature type="compositionally biased region" description="Low complexity" evidence="3">
    <location>
        <begin position="116"/>
        <end position="131"/>
    </location>
</feature>
<feature type="compositionally biased region" description="Low complexity" evidence="3">
    <location>
        <begin position="139"/>
        <end position="157"/>
    </location>
</feature>
<sequence length="238" mass="24699">MKKTVIASSLAVALGVTGYALTTDNSAHASESTTNYAQLANLAQNNPSELNAHPVQAGAYNITFVKDGFKYNFTSDGQSWSWNYTYVGGADTVATTQAAPAAQSTDYSASYSNEASTQSVSSNQQSSNTNVEAVSAPKTTSYSASTSSSSSASTGGSVKEQFLANGGTEAAWNAIVMPESGGNPNAVNPAGYRGLGQTKESWGTGSVASQTKGMINYANSRYGSLDAAIAFRDNHGWW</sequence>
<dbReference type="EC" id="3.2.-.-"/>
<dbReference type="EMBL" id="AP006716">
    <property type="protein sequence ID" value="BAE03795.1"/>
    <property type="molecule type" value="Genomic_DNA"/>
</dbReference>
<dbReference type="RefSeq" id="WP_011274811.1">
    <property type="nucleotide sequence ID" value="NC_007168.1"/>
</dbReference>
<dbReference type="KEGG" id="sha:SH0486"/>
<dbReference type="eggNOG" id="COG0741">
    <property type="taxonomic scope" value="Bacteria"/>
</dbReference>
<dbReference type="HOGENOM" id="CLU_099865_0_0_9"/>
<dbReference type="OrthoDB" id="2241791at2"/>
<dbReference type="Proteomes" id="UP000000543">
    <property type="component" value="Chromosome"/>
</dbReference>
<dbReference type="GO" id="GO:0005576">
    <property type="term" value="C:extracellular region"/>
    <property type="evidence" value="ECO:0007669"/>
    <property type="project" value="UniProtKB-SubCell"/>
</dbReference>
<dbReference type="GO" id="GO:0016798">
    <property type="term" value="F:hydrolase activity, acting on glycosyl bonds"/>
    <property type="evidence" value="ECO:0007669"/>
    <property type="project" value="UniProtKB-KW"/>
</dbReference>
<dbReference type="InterPro" id="IPR023346">
    <property type="entry name" value="Lysozyme-like_dom_sf"/>
</dbReference>
<dbReference type="SUPFAM" id="SSF53955">
    <property type="entry name" value="Lysozyme-like"/>
    <property type="match status" value="1"/>
</dbReference>
<comment type="function">
    <text evidence="1">Is able to cleave peptidoglycan.</text>
</comment>
<comment type="subcellular location">
    <subcellularLocation>
        <location evidence="1">Secreted</location>
    </subcellularLocation>
</comment>
<comment type="similarity">
    <text evidence="4">Belongs to the transglycosylase family. IsaA subfamily.</text>
</comment>
<accession>Q4L980</accession>
<reference key="1">
    <citation type="journal article" date="2005" name="J. Bacteriol.">
        <title>Whole-genome sequencing of Staphylococcus haemolyticus uncovers the extreme plasticity of its genome and the evolution of human-colonizing staphylococcal species.</title>
        <authorList>
            <person name="Takeuchi F."/>
            <person name="Watanabe S."/>
            <person name="Baba T."/>
            <person name="Yuzawa H."/>
            <person name="Ito T."/>
            <person name="Morimoto Y."/>
            <person name="Kuroda M."/>
            <person name="Cui L."/>
            <person name="Takahashi M."/>
            <person name="Ankai A."/>
            <person name="Baba S."/>
            <person name="Fukui S."/>
            <person name="Lee J.C."/>
            <person name="Hiramatsu K."/>
        </authorList>
    </citation>
    <scope>NUCLEOTIDE SEQUENCE [LARGE SCALE GENOMIC DNA]</scope>
    <source>
        <strain>JCSC1435</strain>
    </source>
</reference>
<gene>
    <name type="primary">isaA</name>
    <name type="ordered locus">SH0486</name>
</gene>
<protein>
    <recommendedName>
        <fullName>Probable transglycosylase IsaA</fullName>
        <ecNumber>3.2.-.-</ecNumber>
    </recommendedName>
    <alternativeName>
        <fullName>Immunodominant staphylococcal antigen A</fullName>
    </alternativeName>
</protein>
<keyword id="KW-0326">Glycosidase</keyword>
<keyword id="KW-0378">Hydrolase</keyword>
<keyword id="KW-0964">Secreted</keyword>
<keyword id="KW-0732">Signal</keyword>
<proteinExistence type="inferred from homology"/>